<dbReference type="EC" id="2.7.4.-" evidence="2"/>
<dbReference type="EMBL" id="CP000031">
    <property type="protein sequence ID" value="AAV95009.1"/>
    <property type="molecule type" value="Genomic_DNA"/>
</dbReference>
<dbReference type="SMR" id="Q5LSN8"/>
<dbReference type="STRING" id="246200.SPO1727"/>
<dbReference type="PaxDb" id="246200-SPO1727"/>
<dbReference type="KEGG" id="sil:SPO1727"/>
<dbReference type="eggNOG" id="COG2326">
    <property type="taxonomic scope" value="Bacteria"/>
</dbReference>
<dbReference type="HOGENOM" id="CLU_048699_2_1_5"/>
<dbReference type="BRENDA" id="2.7.4.1">
    <property type="organism ID" value="8123"/>
</dbReference>
<dbReference type="Proteomes" id="UP000001023">
    <property type="component" value="Chromosome"/>
</dbReference>
<dbReference type="GO" id="GO:0008976">
    <property type="term" value="F:polyphosphate kinase activity"/>
    <property type="evidence" value="ECO:0007669"/>
    <property type="project" value="UniProtKB-EC"/>
</dbReference>
<dbReference type="GO" id="GO:0006793">
    <property type="term" value="P:phosphorus metabolic process"/>
    <property type="evidence" value="ECO:0007669"/>
    <property type="project" value="InterPro"/>
</dbReference>
<dbReference type="Gene3D" id="3.40.50.300">
    <property type="entry name" value="P-loop containing nucleotide triphosphate hydrolases"/>
    <property type="match status" value="1"/>
</dbReference>
<dbReference type="InterPro" id="IPR027417">
    <property type="entry name" value="P-loop_NTPase"/>
</dbReference>
<dbReference type="InterPro" id="IPR016898">
    <property type="entry name" value="Polyphosphate_phosphotransfera"/>
</dbReference>
<dbReference type="InterPro" id="IPR022488">
    <property type="entry name" value="PPK2-related"/>
</dbReference>
<dbReference type="InterPro" id="IPR022486">
    <property type="entry name" value="PPK2_PA0141"/>
</dbReference>
<dbReference type="NCBIfam" id="TIGR03707">
    <property type="entry name" value="PPK2_P_aer"/>
    <property type="match status" value="1"/>
</dbReference>
<dbReference type="PANTHER" id="PTHR34383:SF1">
    <property type="entry name" value="ADP-POLYPHOSPHATE PHOSPHOTRANSFERASE"/>
    <property type="match status" value="1"/>
</dbReference>
<dbReference type="PANTHER" id="PTHR34383">
    <property type="entry name" value="POLYPHOSPHATE:AMP PHOSPHOTRANSFERASE-RELATED"/>
    <property type="match status" value="1"/>
</dbReference>
<dbReference type="Pfam" id="PF03976">
    <property type="entry name" value="PPK2"/>
    <property type="match status" value="1"/>
</dbReference>
<dbReference type="PIRSF" id="PIRSF028756">
    <property type="entry name" value="PPK2_prd"/>
    <property type="match status" value="1"/>
</dbReference>
<dbReference type="SUPFAM" id="SSF52540">
    <property type="entry name" value="P-loop containing nucleoside triphosphate hydrolases"/>
    <property type="match status" value="1"/>
</dbReference>
<gene>
    <name evidence="5" type="ordered locus">SPO1727</name>
</gene>
<proteinExistence type="evidence at protein level"/>
<name>PK21C_RUEPO</name>
<organism>
    <name type="scientific">Ruegeria pomeroyi (strain ATCC 700808 / DSM 15171 / DSS-3)</name>
    <name type="common">Silicibacter pomeroyi</name>
    <dbReference type="NCBI Taxonomy" id="246200"/>
    <lineage>
        <taxon>Bacteria</taxon>
        <taxon>Pseudomonadati</taxon>
        <taxon>Pseudomonadota</taxon>
        <taxon>Alphaproteobacteria</taxon>
        <taxon>Rhodobacterales</taxon>
        <taxon>Roseobacteraceae</taxon>
        <taxon>Ruegeria</taxon>
    </lineage>
</organism>
<evidence type="ECO:0000256" key="1">
    <source>
        <dbReference type="SAM" id="MobiDB-lite"/>
    </source>
</evidence>
<evidence type="ECO:0000269" key="2">
    <source>
    </source>
</evidence>
<evidence type="ECO:0000303" key="3">
    <source>
    </source>
</evidence>
<evidence type="ECO:0000305" key="4"/>
<evidence type="ECO:0000312" key="5">
    <source>
        <dbReference type="EMBL" id="AAV95009.1"/>
    </source>
</evidence>
<keyword id="KW-0418">Kinase</keyword>
<keyword id="KW-1185">Reference proteome</keyword>
<keyword id="KW-0808">Transferase</keyword>
<protein>
    <recommendedName>
        <fullName evidence="4">NDP-polyphosphate phosphotransferase 3</fullName>
        <ecNumber evidence="2">2.7.4.-</ecNumber>
    </recommendedName>
    <alternativeName>
        <fullName evidence="4">Polyphosphate kinase PPK2 3</fullName>
    </alternativeName>
    <alternativeName>
        <fullName evidence="3">RpPPK2-3</fullName>
    </alternativeName>
</protein>
<feature type="chain" id="PRO_0000442595" description="NDP-polyphosphate phosphotransferase 3">
    <location>
        <begin position="1"/>
        <end position="301"/>
    </location>
</feature>
<feature type="region of interest" description="Disordered" evidence="1">
    <location>
        <begin position="1"/>
        <end position="21"/>
    </location>
</feature>
<feature type="compositionally biased region" description="Basic and acidic residues" evidence="1">
    <location>
        <begin position="1"/>
        <end position="12"/>
    </location>
</feature>
<accession>Q5LSN8</accession>
<comment type="function">
    <text evidence="2">Uses inorganic polyphosphate (polyP) as a donor to convert NDP to NTP. PolyP hydrolysis is slightly faster with UDP, but it can also use ADP, GDP and CDP.</text>
</comment>
<comment type="catalytic activity">
    <reaction evidence="2">
        <text>[phosphate](n) + ATP = [phosphate](n+1) + ADP</text>
        <dbReference type="Rhea" id="RHEA:19573"/>
        <dbReference type="Rhea" id="RHEA-COMP:9859"/>
        <dbReference type="Rhea" id="RHEA-COMP:14280"/>
        <dbReference type="ChEBI" id="CHEBI:16838"/>
        <dbReference type="ChEBI" id="CHEBI:30616"/>
        <dbReference type="ChEBI" id="CHEBI:456216"/>
    </reaction>
</comment>
<comment type="catalytic activity">
    <reaction evidence="2">
        <text>[phosphate](n) + CTP = [phosphate](n+1) + CDP</text>
        <dbReference type="Rhea" id="RHEA:55408"/>
        <dbReference type="Rhea" id="RHEA-COMP:9859"/>
        <dbReference type="Rhea" id="RHEA-COMP:14280"/>
        <dbReference type="ChEBI" id="CHEBI:16838"/>
        <dbReference type="ChEBI" id="CHEBI:37563"/>
        <dbReference type="ChEBI" id="CHEBI:58069"/>
    </reaction>
</comment>
<comment type="catalytic activity">
    <reaction evidence="2">
        <text>[phosphate](n) + GTP = [phosphate](n+1) + GDP</text>
        <dbReference type="Rhea" id="RHEA:55412"/>
        <dbReference type="Rhea" id="RHEA-COMP:9859"/>
        <dbReference type="Rhea" id="RHEA-COMP:14280"/>
        <dbReference type="ChEBI" id="CHEBI:16838"/>
        <dbReference type="ChEBI" id="CHEBI:37565"/>
        <dbReference type="ChEBI" id="CHEBI:58189"/>
    </reaction>
</comment>
<comment type="catalytic activity">
    <reaction evidence="2">
        <text>[phosphate](n) + UTP = [phosphate](n+1) + UDP</text>
        <dbReference type="Rhea" id="RHEA:55404"/>
        <dbReference type="Rhea" id="RHEA-COMP:9859"/>
        <dbReference type="Rhea" id="RHEA-COMP:14280"/>
        <dbReference type="ChEBI" id="CHEBI:16838"/>
        <dbReference type="ChEBI" id="CHEBI:46398"/>
        <dbReference type="ChEBI" id="CHEBI:58223"/>
    </reaction>
</comment>
<comment type="cofactor">
    <cofactor evidence="2">
        <name>Mg(2+)</name>
        <dbReference type="ChEBI" id="CHEBI:18420"/>
    </cofactor>
    <text evidence="2">Also accepts various divalent metal ions.</text>
</comment>
<comment type="biophysicochemical properties">
    <kinetics>
        <KM evidence="2">3.6 mM for UDP</KM>
        <text evidence="2">kcat is 294 min(-1) with UDP as substrate.</text>
    </kinetics>
    <phDependence>
        <text evidence="2">Optimum pH is 8.</text>
    </phDependence>
</comment>
<comment type="similarity">
    <text evidence="4">Belongs to the polyphosphate kinase 2 (PPK2) family. Class I subfamily.</text>
</comment>
<sequence>MNRNGSTKDPRRMTGAATGEISRYFNDKAPKDIRRAIEKADKDDILSTTYPYDAEMTAKDYRAQMEALQIELVKLQAWIKQSGARVALLFEGRDAAGKGGTIKRFRENLNPRGARVVALSKPTEAERSQWYFQRYIQHLPSAGELVFYDRSWYNRGVVEHVFGWCDEEQRERFFRQVMPFEHDLVDDGIHLFKFWLNVGRAEQLRRFHDRERDPLKQWKLSPVDIAGLDKWEAYTTAISQTLTRSHSDRAPWTVIRSDDKKRARLAAIRTVLSGIDYDNKDRAAVGQPDAAICGGPDIWDA</sequence>
<reference key="1">
    <citation type="journal article" date="2004" name="Nature">
        <title>Genome sequence of Silicibacter pomeroyi reveals adaptations to the marine environment.</title>
        <authorList>
            <person name="Moran M.A."/>
            <person name="Buchan A."/>
            <person name="Gonzalez J.M."/>
            <person name="Heidelberg J.F."/>
            <person name="Whitman W.B."/>
            <person name="Kiene R.P."/>
            <person name="Henriksen J.R."/>
            <person name="King G.M."/>
            <person name="Belas R."/>
            <person name="Fuqua C."/>
            <person name="Brinkac L.M."/>
            <person name="Lewis M."/>
            <person name="Johri S."/>
            <person name="Weaver B."/>
            <person name="Pai G."/>
            <person name="Eisen J.A."/>
            <person name="Rahe E."/>
            <person name="Sheldon W.M."/>
            <person name="Ye W."/>
            <person name="Miller T.R."/>
            <person name="Carlton J."/>
            <person name="Rasko D.A."/>
            <person name="Paulsen I.T."/>
            <person name="Ren Q."/>
            <person name="Daugherty S.C."/>
            <person name="DeBoy R.T."/>
            <person name="Dodson R.J."/>
            <person name="Durkin A.S."/>
            <person name="Madupu R."/>
            <person name="Nelson W.C."/>
            <person name="Sullivan S.A."/>
            <person name="Rosovitz M.J."/>
            <person name="Haft D.H."/>
            <person name="Selengut J."/>
            <person name="Ward N."/>
        </authorList>
    </citation>
    <scope>NUCLEOTIDE SEQUENCE [LARGE SCALE GENOMIC DNA]</scope>
    <source>
        <strain>ATCC 700808 / DSM 15171 / DSS-3</strain>
    </source>
</reference>
<reference key="2">
    <citation type="journal article" date="2014" name="Stand. Genomic Sci.">
        <title>An updated genome annotation for the model marine bacterium Ruegeria pomeroyi DSS-3.</title>
        <authorList>
            <person name="Rivers A.R."/>
            <person name="Smith C.B."/>
            <person name="Moran M.A."/>
        </authorList>
    </citation>
    <scope>GENOME REANNOTATION</scope>
    <source>
        <strain>ATCC 700808 / DSM 15171 / DSS-3</strain>
    </source>
</reference>
<reference key="3">
    <citation type="journal article" date="2014" name="Biotechnol. Lett.">
        <title>Degradation of polyphosphates by polyphosphate kinases from Ruegeria pomeroyi.</title>
        <authorList>
            <person name="Achbergerova L."/>
            <person name="Nahalka J."/>
        </authorList>
    </citation>
    <scope>FUNCTION</scope>
    <scope>CATALYTIC ACTIVITY</scope>
    <scope>COFACTOR</scope>
    <scope>BIOPHYSICOCHEMICAL PROPERTIES</scope>
    <source>
        <strain>ATCC 700808 / DSM 15171 / DSS-3</strain>
    </source>
</reference>